<keyword id="KW-0004">4Fe-4S</keyword>
<keyword id="KW-0903">Direct protein sequencing</keyword>
<keyword id="KW-0227">DNA damage</keyword>
<keyword id="KW-0234">DNA repair</keyword>
<keyword id="KW-0255">Endonuclease</keyword>
<keyword id="KW-0326">Glycosidase</keyword>
<keyword id="KW-0378">Hydrolase</keyword>
<keyword id="KW-0408">Iron</keyword>
<keyword id="KW-0411">Iron-sulfur</keyword>
<keyword id="KW-0479">Metal-binding</keyword>
<keyword id="KW-0540">Nuclease</keyword>
<keyword id="KW-1185">Reference proteome</keyword>
<keyword id="KW-1159">RNA suppression of termination</keyword>
<proteinExistence type="evidence at protein level"/>
<organism>
    <name type="scientific">Micrococcus luteus (strain ATCC 4698 / DSM 20030 / JCM 1464 / CCM 169 / CCUG 5858 / IAM 1056 / NBRC 3333 / NCIMB 9278 / NCTC 2665 / VKM Ac-2230)</name>
    <name type="common">Micrococcus lysodeikticus</name>
    <dbReference type="NCBI Taxonomy" id="465515"/>
    <lineage>
        <taxon>Bacteria</taxon>
        <taxon>Bacillati</taxon>
        <taxon>Actinomycetota</taxon>
        <taxon>Actinomycetes</taxon>
        <taxon>Micrococcales</taxon>
        <taxon>Micrococcaceae</taxon>
        <taxon>Micrococcus</taxon>
    </lineage>
</organism>
<protein>
    <recommendedName>
        <fullName>Ultraviolet N-glycosylase/AP lyase</fullName>
    </recommendedName>
    <alternativeName>
        <fullName>Pyrimidine dimer glycosylase</fullName>
    </alternativeName>
    <alternativeName>
        <fullName>UV-endonuclease</fullName>
    </alternativeName>
    <component>
        <recommendedName>
            <fullName>UV endonuclease 32 kDa isoform</fullName>
        </recommendedName>
    </component>
    <component>
        <recommendedName>
            <fullName>UV endonuclease 31 kDa isoform</fullName>
        </recommendedName>
    </component>
</protein>
<dbReference type="EMBL" id="U22181">
    <property type="protein sequence ID" value="AAA86508.1"/>
    <property type="status" value="ALT_TERM"/>
    <property type="molecule type" value="Genomic_DNA"/>
</dbReference>
<dbReference type="EMBL" id="CP001628">
    <property type="protein sequence ID" value="ACS31305.1"/>
    <property type="molecule type" value="Genomic_DNA"/>
</dbReference>
<dbReference type="STRING" id="465515.Mlut_18220"/>
<dbReference type="EnsemblBacteria" id="ACS31305">
    <property type="protein sequence ID" value="ACS31305"/>
    <property type="gene ID" value="Mlut_18220"/>
</dbReference>
<dbReference type="KEGG" id="mlu:Mlut_18220"/>
<dbReference type="eggNOG" id="COG0177">
    <property type="taxonomic scope" value="Bacteria"/>
</dbReference>
<dbReference type="HOGENOM" id="CLU_012862_3_2_11"/>
<dbReference type="Proteomes" id="UP000000738">
    <property type="component" value="Chromosome"/>
</dbReference>
<dbReference type="GO" id="GO:0051539">
    <property type="term" value="F:4 iron, 4 sulfur cluster binding"/>
    <property type="evidence" value="ECO:0007669"/>
    <property type="project" value="UniProtKB-UniRule"/>
</dbReference>
<dbReference type="GO" id="GO:0003677">
    <property type="term" value="F:DNA binding"/>
    <property type="evidence" value="ECO:0007669"/>
    <property type="project" value="UniProtKB-UniRule"/>
</dbReference>
<dbReference type="GO" id="GO:0019104">
    <property type="term" value="F:DNA N-glycosylase activity"/>
    <property type="evidence" value="ECO:0007669"/>
    <property type="project" value="UniProtKB-UniRule"/>
</dbReference>
<dbReference type="GO" id="GO:0003906">
    <property type="term" value="F:DNA-(apurinic or apyrimidinic site) endonuclease activity"/>
    <property type="evidence" value="ECO:0007669"/>
    <property type="project" value="UniProtKB-UniRule"/>
</dbReference>
<dbReference type="GO" id="GO:0004519">
    <property type="term" value="F:endonuclease activity"/>
    <property type="evidence" value="ECO:0007669"/>
    <property type="project" value="UniProtKB-KW"/>
</dbReference>
<dbReference type="GO" id="GO:0046872">
    <property type="term" value="F:metal ion binding"/>
    <property type="evidence" value="ECO:0007669"/>
    <property type="project" value="UniProtKB-KW"/>
</dbReference>
<dbReference type="GO" id="GO:0006285">
    <property type="term" value="P:base-excision repair, AP site formation"/>
    <property type="evidence" value="ECO:0007669"/>
    <property type="project" value="TreeGrafter"/>
</dbReference>
<dbReference type="CDD" id="cd00056">
    <property type="entry name" value="ENDO3c"/>
    <property type="match status" value="1"/>
</dbReference>
<dbReference type="FunFam" id="1.10.340.30:FF:000001">
    <property type="entry name" value="Endonuclease III"/>
    <property type="match status" value="1"/>
</dbReference>
<dbReference type="Gene3D" id="1.10.1670.10">
    <property type="entry name" value="Helix-hairpin-Helix base-excision DNA repair enzymes (C-terminal)"/>
    <property type="match status" value="1"/>
</dbReference>
<dbReference type="Gene3D" id="1.10.340.30">
    <property type="entry name" value="Hypothetical protein, domain 2"/>
    <property type="match status" value="1"/>
</dbReference>
<dbReference type="HAMAP" id="MF_00942">
    <property type="entry name" value="Nth"/>
    <property type="match status" value="1"/>
</dbReference>
<dbReference type="InterPro" id="IPR011257">
    <property type="entry name" value="DNA_glycosylase"/>
</dbReference>
<dbReference type="InterPro" id="IPR004036">
    <property type="entry name" value="Endonuclease-III-like_CS2"/>
</dbReference>
<dbReference type="InterPro" id="IPR003651">
    <property type="entry name" value="Endonuclease3_FeS-loop_motif"/>
</dbReference>
<dbReference type="InterPro" id="IPR004035">
    <property type="entry name" value="Endouclease-III_FeS-bd_BS"/>
</dbReference>
<dbReference type="InterPro" id="IPR003265">
    <property type="entry name" value="HhH-GPD_domain"/>
</dbReference>
<dbReference type="InterPro" id="IPR023170">
    <property type="entry name" value="HhH_base_excis_C"/>
</dbReference>
<dbReference type="InterPro" id="IPR000445">
    <property type="entry name" value="HhH_motif"/>
</dbReference>
<dbReference type="InterPro" id="IPR005759">
    <property type="entry name" value="Nth"/>
</dbReference>
<dbReference type="NCBIfam" id="TIGR01083">
    <property type="entry name" value="nth"/>
    <property type="match status" value="1"/>
</dbReference>
<dbReference type="PANTHER" id="PTHR10359">
    <property type="entry name" value="A/G-SPECIFIC ADENINE GLYCOSYLASE/ENDONUCLEASE III"/>
    <property type="match status" value="1"/>
</dbReference>
<dbReference type="PANTHER" id="PTHR10359:SF18">
    <property type="entry name" value="ENDONUCLEASE III"/>
    <property type="match status" value="1"/>
</dbReference>
<dbReference type="Pfam" id="PF10576">
    <property type="entry name" value="EndIII_4Fe-2S"/>
    <property type="match status" value="1"/>
</dbReference>
<dbReference type="Pfam" id="PF00633">
    <property type="entry name" value="HHH"/>
    <property type="match status" value="1"/>
</dbReference>
<dbReference type="Pfam" id="PF00730">
    <property type="entry name" value="HhH-GPD"/>
    <property type="match status" value="1"/>
</dbReference>
<dbReference type="SMART" id="SM00478">
    <property type="entry name" value="ENDO3c"/>
    <property type="match status" value="1"/>
</dbReference>
<dbReference type="SMART" id="SM00525">
    <property type="entry name" value="FES"/>
    <property type="match status" value="1"/>
</dbReference>
<dbReference type="SUPFAM" id="SSF48150">
    <property type="entry name" value="DNA-glycosylase"/>
    <property type="match status" value="1"/>
</dbReference>
<dbReference type="PROSITE" id="PS00764">
    <property type="entry name" value="ENDONUCLEASE_III_1"/>
    <property type="match status" value="1"/>
</dbReference>
<dbReference type="PROSITE" id="PS01155">
    <property type="entry name" value="ENDONUCLEASE_III_2"/>
    <property type="match status" value="1"/>
</dbReference>
<evidence type="ECO:0000250" key="1"/>
<evidence type="ECO:0000256" key="2">
    <source>
        <dbReference type="SAM" id="MobiDB-lite"/>
    </source>
</evidence>
<evidence type="ECO:0000269" key="3">
    <source>
    </source>
</evidence>
<evidence type="ECO:0000305" key="4"/>
<accession>P46303</accession>
<accession>C5CCV3</accession>
<comment type="function">
    <text evidence="3">DNA repair enzyme that has both DNA N-glycosylase activity and AP-lyase activity. Initiates repair at cis-syn pyrimidine dimers. Proceeds via an imino enzyme:DNA intermediate.</text>
</comment>
<comment type="cofactor">
    <cofactor evidence="1">
        <name>[4Fe-4S] cluster</name>
        <dbReference type="ChEBI" id="CHEBI:49883"/>
    </cofactor>
    <text evidence="1">Binds 1 [4Fe-4S] cluster.</text>
</comment>
<comment type="miscellaneous">
    <text>Readthrough of the terminator UAG occurs between codons for Gly-268 and Ala-270. Two forms of 31 kDa and 32 kDa have been detected.</text>
</comment>
<comment type="similarity">
    <text evidence="4">Belongs to the Nth/MutY family.</text>
</comment>
<sequence>METESTGTPTGETRLALVRRARRIDRILAETYPYAVAELDFETPFELLVATVLSAQTTDVRVNAATPALFARFPDAHAMAAATEPELQELVRSTGFYRNKASAILRLSQELVGRHDGEVPARLEDLVALPGVGRKTAFVVLGNAFGQPGITVDTHFGRLARRLGFTDETDPGKGRARRGRPVPPARDWTMLSHRLIFHGRRVCHARRPACGRCPIARWCPSYAAGETDPERARALLAYELKPGREELLELLRAGRTAGAAGPRPRAGGXAPGLPAQPFR</sequence>
<name>UVEN_MICLC</name>
<feature type="chain" id="PRO_0000001742" description="UV endonuclease 32 kDa isoform" evidence="4">
    <location>
        <begin position="1"/>
        <end position="279"/>
    </location>
</feature>
<feature type="chain" id="PRO_0000001743" description="UV endonuclease 31 kDa isoform">
    <location>
        <begin position="1"/>
        <end position="268"/>
    </location>
</feature>
<feature type="domain" description="HhH">
    <location>
        <begin position="123"/>
        <end position="142"/>
    </location>
</feature>
<feature type="region of interest" description="Disordered" evidence="2">
    <location>
        <begin position="256"/>
        <end position="279"/>
    </location>
</feature>
<feature type="binding site" evidence="1">
    <location>
        <position position="203"/>
    </location>
    <ligand>
        <name>[4Fe-4S] cluster</name>
        <dbReference type="ChEBI" id="CHEBI:49883"/>
    </ligand>
</feature>
<feature type="binding site" evidence="1">
    <location>
        <position position="210"/>
    </location>
    <ligand>
        <name>[4Fe-4S] cluster</name>
        <dbReference type="ChEBI" id="CHEBI:49883"/>
    </ligand>
</feature>
<feature type="binding site" evidence="1">
    <location>
        <position position="213"/>
    </location>
    <ligand>
        <name>[4Fe-4S] cluster</name>
        <dbReference type="ChEBI" id="CHEBI:49883"/>
    </ligand>
</feature>
<feature type="binding site" evidence="1">
    <location>
        <position position="219"/>
    </location>
    <ligand>
        <name>[4Fe-4S] cluster</name>
        <dbReference type="ChEBI" id="CHEBI:49883"/>
    </ligand>
</feature>
<feature type="sequence conflict" description="In Ref. 2; ACS31305." evidence="4" ref="2">
    <original>GKGRARRGRPVPPA</original>
    <variation>VKVEHAVGALFPR</variation>
    <location>
        <begin position="172"/>
        <end position="185"/>
    </location>
</feature>
<feature type="sequence conflict" description="In Ref. 2; ACS31305." evidence="4" ref="2">
    <original>R</original>
    <variation>A</variation>
    <location>
        <position position="212"/>
    </location>
</feature>
<feature type="sequence conflict" description="In Ref. 2; ACS31305." evidence="4" ref="2">
    <original>A</original>
    <variation>G</variation>
    <location>
        <position position="223"/>
    </location>
</feature>
<feature type="sequence conflict" description="In Ref. 2; ACS31305." evidence="4" ref="2">
    <original>AGAAGPRPRAGGXAPGLPAQPFR</original>
    <variation>RRELRALGHGLEA</variation>
    <location>
        <begin position="257"/>
        <end position="279"/>
    </location>
</feature>
<gene>
    <name type="primary">pdg</name>
    <name type="ordered locus">Mlut_18220</name>
</gene>
<reference key="1">
    <citation type="journal article" date="1995" name="J. Biol. Chem.">
        <title>Purification and cloning of Micrococcus luteus ultraviolet endonuclease, an N-glycosylase/abasic lyase that proceeds via an imino enzyme-DNA intermediate.</title>
        <authorList>
            <person name="Piersen C.E."/>
            <person name="Prince M.A."/>
            <person name="Augustine M.L."/>
            <person name="Dodson M.L."/>
            <person name="Lloyd R.S."/>
        </authorList>
    </citation>
    <scope>NUCLEOTIDE SEQUENCE [GENOMIC DNA]</scope>
    <scope>PROTEIN SEQUENCE OF 1-35</scope>
    <scope>FUNCTION</scope>
</reference>
<reference key="2">
    <citation type="journal article" date="2010" name="J. Bacteriol.">
        <title>Genome sequence of the Fleming strain of Micrococcus luteus, a simple free-living actinobacterium.</title>
        <authorList>
            <person name="Young M."/>
            <person name="Artsatbanov V."/>
            <person name="Beller H.R."/>
            <person name="Chandra G."/>
            <person name="Chater K.F."/>
            <person name="Dover L.G."/>
            <person name="Goh E.B."/>
            <person name="Kahan T."/>
            <person name="Kaprelyants A.S."/>
            <person name="Kyrpides N."/>
            <person name="Lapidus A."/>
            <person name="Lowry S.R."/>
            <person name="Lykidis A."/>
            <person name="Mahillon J."/>
            <person name="Markowitz V."/>
            <person name="Mavromatis K."/>
            <person name="Mukamolova G.V."/>
            <person name="Oren A."/>
            <person name="Rokem J.S."/>
            <person name="Smith M.C."/>
            <person name="Young D.I."/>
            <person name="Greenblatt C.L."/>
        </authorList>
    </citation>
    <scope>NUCLEOTIDE SEQUENCE [LARGE SCALE GENOMIC DNA]</scope>
    <source>
        <strain>ATCC 4698 / DSM 20030 / JCM 1464 / CCM 169 / CCUG 5858 / IAM 1056 / NBRC 3333 / NCIMB 9278 / NCTC 2665 / VKM Ac-2230</strain>
    </source>
</reference>